<organism>
    <name type="scientific">Parafrankia sp. (strain EAN1pec)</name>
    <dbReference type="NCBI Taxonomy" id="298653"/>
    <lineage>
        <taxon>Bacteria</taxon>
        <taxon>Bacillati</taxon>
        <taxon>Actinomycetota</taxon>
        <taxon>Actinomycetes</taxon>
        <taxon>Frankiales</taxon>
        <taxon>Frankiaceae</taxon>
        <taxon>Parafrankia</taxon>
    </lineage>
</organism>
<keyword id="KW-0066">ATP synthesis</keyword>
<keyword id="KW-0067">ATP-binding</keyword>
<keyword id="KW-1003">Cell membrane</keyword>
<keyword id="KW-0139">CF(1)</keyword>
<keyword id="KW-0375">Hydrogen ion transport</keyword>
<keyword id="KW-0406">Ion transport</keyword>
<keyword id="KW-0472">Membrane</keyword>
<keyword id="KW-0547">Nucleotide-binding</keyword>
<keyword id="KW-1278">Translocase</keyword>
<keyword id="KW-0813">Transport</keyword>
<dbReference type="EC" id="7.1.2.2" evidence="1"/>
<dbReference type="EMBL" id="CP000820">
    <property type="protein sequence ID" value="ABW10478.1"/>
    <property type="molecule type" value="Genomic_DNA"/>
</dbReference>
<dbReference type="RefSeq" id="WP_020458660.1">
    <property type="nucleotide sequence ID" value="NC_009921.1"/>
</dbReference>
<dbReference type="SMR" id="A8L3W3"/>
<dbReference type="STRING" id="298653.Franean1_1022"/>
<dbReference type="KEGG" id="fre:Franean1_1022"/>
<dbReference type="eggNOG" id="COG0056">
    <property type="taxonomic scope" value="Bacteria"/>
</dbReference>
<dbReference type="HOGENOM" id="CLU_010091_2_1_11"/>
<dbReference type="GO" id="GO:0005886">
    <property type="term" value="C:plasma membrane"/>
    <property type="evidence" value="ECO:0007669"/>
    <property type="project" value="UniProtKB-SubCell"/>
</dbReference>
<dbReference type="GO" id="GO:0045259">
    <property type="term" value="C:proton-transporting ATP synthase complex"/>
    <property type="evidence" value="ECO:0007669"/>
    <property type="project" value="UniProtKB-KW"/>
</dbReference>
<dbReference type="GO" id="GO:0043531">
    <property type="term" value="F:ADP binding"/>
    <property type="evidence" value="ECO:0007669"/>
    <property type="project" value="TreeGrafter"/>
</dbReference>
<dbReference type="GO" id="GO:0005524">
    <property type="term" value="F:ATP binding"/>
    <property type="evidence" value="ECO:0007669"/>
    <property type="project" value="UniProtKB-UniRule"/>
</dbReference>
<dbReference type="GO" id="GO:0046933">
    <property type="term" value="F:proton-transporting ATP synthase activity, rotational mechanism"/>
    <property type="evidence" value="ECO:0007669"/>
    <property type="project" value="UniProtKB-UniRule"/>
</dbReference>
<dbReference type="CDD" id="cd18113">
    <property type="entry name" value="ATP-synt_F1_alpha_C"/>
    <property type="match status" value="1"/>
</dbReference>
<dbReference type="CDD" id="cd18116">
    <property type="entry name" value="ATP-synt_F1_alpha_N"/>
    <property type="match status" value="1"/>
</dbReference>
<dbReference type="CDD" id="cd01132">
    <property type="entry name" value="F1-ATPase_alpha_CD"/>
    <property type="match status" value="1"/>
</dbReference>
<dbReference type="FunFam" id="1.20.150.20:FF:000001">
    <property type="entry name" value="ATP synthase subunit alpha"/>
    <property type="match status" value="1"/>
</dbReference>
<dbReference type="FunFam" id="3.40.50.300:FF:000002">
    <property type="entry name" value="ATP synthase subunit alpha"/>
    <property type="match status" value="1"/>
</dbReference>
<dbReference type="Gene3D" id="2.40.30.20">
    <property type="match status" value="1"/>
</dbReference>
<dbReference type="Gene3D" id="1.20.150.20">
    <property type="entry name" value="ATP synthase alpha/beta chain, C-terminal domain"/>
    <property type="match status" value="1"/>
</dbReference>
<dbReference type="Gene3D" id="3.40.50.300">
    <property type="entry name" value="P-loop containing nucleotide triphosphate hydrolases"/>
    <property type="match status" value="1"/>
</dbReference>
<dbReference type="HAMAP" id="MF_01346">
    <property type="entry name" value="ATP_synth_alpha_bact"/>
    <property type="match status" value="1"/>
</dbReference>
<dbReference type="InterPro" id="IPR023366">
    <property type="entry name" value="ATP_synth_asu-like_sf"/>
</dbReference>
<dbReference type="InterPro" id="IPR000793">
    <property type="entry name" value="ATP_synth_asu_C"/>
</dbReference>
<dbReference type="InterPro" id="IPR038376">
    <property type="entry name" value="ATP_synth_asu_C_sf"/>
</dbReference>
<dbReference type="InterPro" id="IPR033732">
    <property type="entry name" value="ATP_synth_F1_a_nt-bd_dom"/>
</dbReference>
<dbReference type="InterPro" id="IPR005294">
    <property type="entry name" value="ATP_synth_F1_asu"/>
</dbReference>
<dbReference type="InterPro" id="IPR020003">
    <property type="entry name" value="ATPase_a/bsu_AS"/>
</dbReference>
<dbReference type="InterPro" id="IPR004100">
    <property type="entry name" value="ATPase_F1/V1/A1_a/bsu_N"/>
</dbReference>
<dbReference type="InterPro" id="IPR036121">
    <property type="entry name" value="ATPase_F1/V1/A1_a/bsu_N_sf"/>
</dbReference>
<dbReference type="InterPro" id="IPR000194">
    <property type="entry name" value="ATPase_F1/V1/A1_a/bsu_nucl-bd"/>
</dbReference>
<dbReference type="InterPro" id="IPR027417">
    <property type="entry name" value="P-loop_NTPase"/>
</dbReference>
<dbReference type="NCBIfam" id="TIGR00962">
    <property type="entry name" value="atpA"/>
    <property type="match status" value="1"/>
</dbReference>
<dbReference type="NCBIfam" id="NF009884">
    <property type="entry name" value="PRK13343.1"/>
    <property type="match status" value="1"/>
</dbReference>
<dbReference type="PANTHER" id="PTHR48082">
    <property type="entry name" value="ATP SYNTHASE SUBUNIT ALPHA, MITOCHONDRIAL"/>
    <property type="match status" value="1"/>
</dbReference>
<dbReference type="PANTHER" id="PTHR48082:SF2">
    <property type="entry name" value="ATP SYNTHASE SUBUNIT ALPHA, MITOCHONDRIAL"/>
    <property type="match status" value="1"/>
</dbReference>
<dbReference type="Pfam" id="PF00006">
    <property type="entry name" value="ATP-synt_ab"/>
    <property type="match status" value="1"/>
</dbReference>
<dbReference type="Pfam" id="PF00306">
    <property type="entry name" value="ATP-synt_ab_C"/>
    <property type="match status" value="1"/>
</dbReference>
<dbReference type="Pfam" id="PF02874">
    <property type="entry name" value="ATP-synt_ab_N"/>
    <property type="match status" value="1"/>
</dbReference>
<dbReference type="SUPFAM" id="SSF47917">
    <property type="entry name" value="C-terminal domain of alpha and beta subunits of F1 ATP synthase"/>
    <property type="match status" value="1"/>
</dbReference>
<dbReference type="SUPFAM" id="SSF50615">
    <property type="entry name" value="N-terminal domain of alpha and beta subunits of F1 ATP synthase"/>
    <property type="match status" value="1"/>
</dbReference>
<dbReference type="SUPFAM" id="SSF52540">
    <property type="entry name" value="P-loop containing nucleoside triphosphate hydrolases"/>
    <property type="match status" value="1"/>
</dbReference>
<dbReference type="PROSITE" id="PS00152">
    <property type="entry name" value="ATPASE_ALPHA_BETA"/>
    <property type="match status" value="1"/>
</dbReference>
<evidence type="ECO:0000255" key="1">
    <source>
        <dbReference type="HAMAP-Rule" id="MF_01346"/>
    </source>
</evidence>
<evidence type="ECO:0000256" key="2">
    <source>
        <dbReference type="SAM" id="MobiDB-lite"/>
    </source>
</evidence>
<reference key="1">
    <citation type="journal article" date="2007" name="Genome Res.">
        <title>Genome characteristics of facultatively symbiotic Frankia sp. strains reflect host range and host plant biogeography.</title>
        <authorList>
            <person name="Normand P."/>
            <person name="Lapierre P."/>
            <person name="Tisa L.S."/>
            <person name="Gogarten J.P."/>
            <person name="Alloisio N."/>
            <person name="Bagnarol E."/>
            <person name="Bassi C.A."/>
            <person name="Berry A.M."/>
            <person name="Bickhart D.M."/>
            <person name="Choisne N."/>
            <person name="Couloux A."/>
            <person name="Cournoyer B."/>
            <person name="Cruveiller S."/>
            <person name="Daubin V."/>
            <person name="Demange N."/>
            <person name="Francino M.P."/>
            <person name="Goltsman E."/>
            <person name="Huang Y."/>
            <person name="Kopp O.R."/>
            <person name="Labarre L."/>
            <person name="Lapidus A."/>
            <person name="Lavire C."/>
            <person name="Marechal J."/>
            <person name="Martinez M."/>
            <person name="Mastronunzio J.E."/>
            <person name="Mullin B.C."/>
            <person name="Niemann J."/>
            <person name="Pujic P."/>
            <person name="Rawnsley T."/>
            <person name="Rouy Z."/>
            <person name="Schenowitz C."/>
            <person name="Sellstedt A."/>
            <person name="Tavares F."/>
            <person name="Tomkins J.P."/>
            <person name="Vallenet D."/>
            <person name="Valverde C."/>
            <person name="Wall L.G."/>
            <person name="Wang Y."/>
            <person name="Medigue C."/>
            <person name="Benson D.R."/>
        </authorList>
    </citation>
    <scope>NUCLEOTIDE SEQUENCE [LARGE SCALE GENOMIC DNA]</scope>
    <source>
        <strain>EAN1pec</strain>
    </source>
</reference>
<feature type="chain" id="PRO_1000143384" description="ATP synthase subunit alpha">
    <location>
        <begin position="1"/>
        <end position="553"/>
    </location>
</feature>
<feature type="region of interest" description="Disordered" evidence="2">
    <location>
        <begin position="527"/>
        <end position="553"/>
    </location>
</feature>
<feature type="compositionally biased region" description="Basic and acidic residues" evidence="2">
    <location>
        <begin position="533"/>
        <end position="553"/>
    </location>
</feature>
<feature type="binding site" evidence="1">
    <location>
        <begin position="173"/>
        <end position="180"/>
    </location>
    <ligand>
        <name>ATP</name>
        <dbReference type="ChEBI" id="CHEBI:30616"/>
    </ligand>
</feature>
<feature type="site" description="Required for activity" evidence="1">
    <location>
        <position position="374"/>
    </location>
</feature>
<sequence length="553" mass="59768">MTELSIRPEEIRDALREYVDSFQATSGDREEVGRVVVTGDGIARVEGLPHTMTNELLEFSGGVLGLALNLEVGEIGCVILGDAEHIEEGQEVRRTGEILAVPVGDGFLGRVVDPLGRPIDGLGDIAAAGTRALELQAPSVVQRQPVKEPLQTGIKAIDAMTAIGRGQRQLIIGDRQTGKTTVAIDAIINQRDNWASGDPKKQVKCVYVAIGQKKTTIREVVNTLEEAGALAYTTIVAAPADQPAGFKYIAPYTGSAIGQYWMYNGQHSLVVFDDLSKQAEAYRAISLLLRRPPGREAYPGDVFYLHSRLLERCAKLSDELGGGSLTGLPIIETKANDISAYIPTNVISITDGQIFLESDLFNQGVRPAINVGTSVSRVGGSAQVKAMKSVAGRLRLDLAQYRELEAFSAFGSDLDKASRDQLARGARLVELLKQPQNKPFSVERQVVSIWAGTTGKLDDVPVEDIRRFEAEFLDFVGRTHGAIYDTIVNTGKLGDDLVSSLESAIAEFKEQFTLSSGKQLVNEAAPEALDPSAVEREEIAVHHRKPSDETAGH</sequence>
<comment type="function">
    <text evidence="1">Produces ATP from ADP in the presence of a proton gradient across the membrane. The alpha chain is a regulatory subunit.</text>
</comment>
<comment type="catalytic activity">
    <reaction evidence="1">
        <text>ATP + H2O + 4 H(+)(in) = ADP + phosphate + 5 H(+)(out)</text>
        <dbReference type="Rhea" id="RHEA:57720"/>
        <dbReference type="ChEBI" id="CHEBI:15377"/>
        <dbReference type="ChEBI" id="CHEBI:15378"/>
        <dbReference type="ChEBI" id="CHEBI:30616"/>
        <dbReference type="ChEBI" id="CHEBI:43474"/>
        <dbReference type="ChEBI" id="CHEBI:456216"/>
        <dbReference type="EC" id="7.1.2.2"/>
    </reaction>
</comment>
<comment type="subunit">
    <text evidence="1">F-type ATPases have 2 components, CF(1) - the catalytic core - and CF(0) - the membrane proton channel. CF(1) has five subunits: alpha(3), beta(3), gamma(1), delta(1), epsilon(1). CF(0) has three main subunits: a(1), b(2) and c(9-12). The alpha and beta chains form an alternating ring which encloses part of the gamma chain. CF(1) is attached to CF(0) by a central stalk formed by the gamma and epsilon chains, while a peripheral stalk is formed by the delta and b chains.</text>
</comment>
<comment type="subcellular location">
    <subcellularLocation>
        <location evidence="1">Cell membrane</location>
        <topology evidence="1">Peripheral membrane protein</topology>
    </subcellularLocation>
</comment>
<comment type="similarity">
    <text evidence="1">Belongs to the ATPase alpha/beta chains family.</text>
</comment>
<name>ATPA_PARS2</name>
<proteinExistence type="inferred from homology"/>
<gene>
    <name evidence="1" type="primary">atpA</name>
    <name type="ordered locus">Franean1_1022</name>
</gene>
<protein>
    <recommendedName>
        <fullName evidence="1">ATP synthase subunit alpha</fullName>
        <ecNumber evidence="1">7.1.2.2</ecNumber>
    </recommendedName>
    <alternativeName>
        <fullName evidence="1">ATP synthase F1 sector subunit alpha</fullName>
    </alternativeName>
    <alternativeName>
        <fullName evidence="1">F-ATPase subunit alpha</fullName>
    </alternativeName>
</protein>
<accession>A8L3W3</accession>